<gene>
    <name evidence="1" type="primary">rpoC1</name>
    <name type="ordered locus">LopeCp024</name>
</gene>
<dbReference type="EC" id="2.7.7.6" evidence="1"/>
<dbReference type="EMBL" id="AM777385">
    <property type="protein sequence ID" value="CAO85967.1"/>
    <property type="molecule type" value="Genomic_DNA"/>
</dbReference>
<dbReference type="RefSeq" id="YP_001531274.1">
    <property type="nucleotide sequence ID" value="NC_009950.1"/>
</dbReference>
<dbReference type="SMR" id="A8Y9G1"/>
<dbReference type="GeneID" id="5696612"/>
<dbReference type="KEGG" id="lper:5696612"/>
<dbReference type="GO" id="GO:0009507">
    <property type="term" value="C:chloroplast"/>
    <property type="evidence" value="ECO:0007669"/>
    <property type="project" value="UniProtKB-SubCell"/>
</dbReference>
<dbReference type="GO" id="GO:0000428">
    <property type="term" value="C:DNA-directed RNA polymerase complex"/>
    <property type="evidence" value="ECO:0007669"/>
    <property type="project" value="UniProtKB-KW"/>
</dbReference>
<dbReference type="GO" id="GO:0005739">
    <property type="term" value="C:mitochondrion"/>
    <property type="evidence" value="ECO:0007669"/>
    <property type="project" value="GOC"/>
</dbReference>
<dbReference type="GO" id="GO:0003677">
    <property type="term" value="F:DNA binding"/>
    <property type="evidence" value="ECO:0007669"/>
    <property type="project" value="UniProtKB-UniRule"/>
</dbReference>
<dbReference type="GO" id="GO:0003899">
    <property type="term" value="F:DNA-directed RNA polymerase activity"/>
    <property type="evidence" value="ECO:0007669"/>
    <property type="project" value="UniProtKB-UniRule"/>
</dbReference>
<dbReference type="GO" id="GO:0000287">
    <property type="term" value="F:magnesium ion binding"/>
    <property type="evidence" value="ECO:0007669"/>
    <property type="project" value="UniProtKB-UniRule"/>
</dbReference>
<dbReference type="GO" id="GO:0008270">
    <property type="term" value="F:zinc ion binding"/>
    <property type="evidence" value="ECO:0007669"/>
    <property type="project" value="UniProtKB-UniRule"/>
</dbReference>
<dbReference type="GO" id="GO:0006351">
    <property type="term" value="P:DNA-templated transcription"/>
    <property type="evidence" value="ECO:0007669"/>
    <property type="project" value="UniProtKB-UniRule"/>
</dbReference>
<dbReference type="Gene3D" id="1.10.40.90">
    <property type="match status" value="1"/>
</dbReference>
<dbReference type="Gene3D" id="2.40.40.20">
    <property type="match status" value="1"/>
</dbReference>
<dbReference type="Gene3D" id="4.10.860.120">
    <property type="entry name" value="RNA polymerase II, clamp domain"/>
    <property type="match status" value="1"/>
</dbReference>
<dbReference type="Gene3D" id="1.10.274.100">
    <property type="entry name" value="RNA polymerase Rpb1, domain 3"/>
    <property type="match status" value="1"/>
</dbReference>
<dbReference type="HAMAP" id="MF_01323">
    <property type="entry name" value="RNApol_bact_RpoC1"/>
    <property type="match status" value="1"/>
</dbReference>
<dbReference type="InterPro" id="IPR045867">
    <property type="entry name" value="DNA-dir_RpoC_beta_prime"/>
</dbReference>
<dbReference type="InterPro" id="IPR000722">
    <property type="entry name" value="RNA_pol_asu"/>
</dbReference>
<dbReference type="InterPro" id="IPR006592">
    <property type="entry name" value="RNA_pol_N"/>
</dbReference>
<dbReference type="InterPro" id="IPR007080">
    <property type="entry name" value="RNA_pol_Rpb1_1"/>
</dbReference>
<dbReference type="InterPro" id="IPR042102">
    <property type="entry name" value="RNA_pol_Rpb1_3_sf"/>
</dbReference>
<dbReference type="InterPro" id="IPR044893">
    <property type="entry name" value="RNA_pol_Rpb1_clamp_domain"/>
</dbReference>
<dbReference type="InterPro" id="IPR034678">
    <property type="entry name" value="RNApol_RpoC1"/>
</dbReference>
<dbReference type="PANTHER" id="PTHR19376">
    <property type="entry name" value="DNA-DIRECTED RNA POLYMERASE"/>
    <property type="match status" value="1"/>
</dbReference>
<dbReference type="PANTHER" id="PTHR19376:SF54">
    <property type="entry name" value="DNA-DIRECTED RNA POLYMERASE SUBUNIT BETA"/>
    <property type="match status" value="1"/>
</dbReference>
<dbReference type="Pfam" id="PF04997">
    <property type="entry name" value="RNA_pol_Rpb1_1"/>
    <property type="match status" value="1"/>
</dbReference>
<dbReference type="Pfam" id="PF00623">
    <property type="entry name" value="RNA_pol_Rpb1_2"/>
    <property type="match status" value="2"/>
</dbReference>
<dbReference type="SMART" id="SM00663">
    <property type="entry name" value="RPOLA_N"/>
    <property type="match status" value="1"/>
</dbReference>
<dbReference type="SUPFAM" id="SSF64484">
    <property type="entry name" value="beta and beta-prime subunits of DNA dependent RNA-polymerase"/>
    <property type="match status" value="1"/>
</dbReference>
<protein>
    <recommendedName>
        <fullName evidence="1">DNA-directed RNA polymerase subunit beta'</fullName>
        <ecNumber evidence="1">2.7.7.6</ecNumber>
    </recommendedName>
    <alternativeName>
        <fullName evidence="1">PEP</fullName>
    </alternativeName>
    <alternativeName>
        <fullName evidence="1">Plastid-encoded RNA polymerase subunit beta'</fullName>
        <shortName evidence="1">RNA polymerase subunit beta'</shortName>
    </alternativeName>
</protein>
<sequence>MIDQYKHQQLQIGLVSPQQIKAWANKNLPNGEVVGEVTRPSTFHYKTDKPEKDGLFCERIFGPIKSGICACGNSRASGAENEDERFCQKCGVEFVDSRIRRYQMGYIKLACPVTHVWYLKGLPSYIANLLDKPLKKLEGLVYGDFSFARPSTKKPTFLRLRGLFEEEIASCNHSISPFFSTPGFATFRNREIATGAGAIREQLADLDLRIIIENSLVEWKELEDEGYSGDEWEDRKRRIRKVFLIRRMQLAKHFIQTNVEPEWMVLCLLPVLPPELRPIVYRSGDKVVTSDINELYKRVIRRNNNLAYLLKRSELAPADLVMCQEKLVQEAVDTLLDSGSRGQPMRDGHNKVYKSLSDVIEGKEGRFRETLLGKRVDYSGRSVIVVGPSLSLHQCGLPLEIAIKLFQLFVIRDLITKRATSNVRIAKRKIWEKEPIVWEILQEVMRGHPVLLNRAPTLHRLGIQAFQPTLVEGRTISLHPLVCKGFNADFDGDQMAVHLPLSLEAQAEARLLMFSHMNLLSPAIGDPICVPTQDMLIGLYVLTIGNRRGICANRYNSCVNYPTKKVNYNMKDKEPHFSSSYDALGAYRQKLISLDSPLWLRWKLDQRVIGSREVPIEVQYESLGTYHEIYAHYLIVGNRKKEIRSIYIRTTLGHISFYRELEEAIQGFSQAYSYTI</sequence>
<organism>
    <name type="scientific">Lolium perenne</name>
    <name type="common">Perennial ryegrass</name>
    <dbReference type="NCBI Taxonomy" id="4522"/>
    <lineage>
        <taxon>Eukaryota</taxon>
        <taxon>Viridiplantae</taxon>
        <taxon>Streptophyta</taxon>
        <taxon>Embryophyta</taxon>
        <taxon>Tracheophyta</taxon>
        <taxon>Spermatophyta</taxon>
        <taxon>Magnoliopsida</taxon>
        <taxon>Liliopsida</taxon>
        <taxon>Poales</taxon>
        <taxon>Poaceae</taxon>
        <taxon>BOP clade</taxon>
        <taxon>Pooideae</taxon>
        <taxon>Poodae</taxon>
        <taxon>Poeae</taxon>
        <taxon>Poeae Chloroplast Group 2 (Poeae type)</taxon>
        <taxon>Loliodinae</taxon>
        <taxon>Loliinae</taxon>
        <taxon>Lolium</taxon>
    </lineage>
</organism>
<reference key="1">
    <citation type="journal article" date="2008" name="PLoS ONE">
        <title>An optimized chloroplast DNA extraction protocol for grasses (Poaceae) proves suitable for whole plastid genome sequencing and SNP detection.</title>
        <authorList>
            <person name="Diekmann K."/>
            <person name="Hodkinson T.R."/>
            <person name="Fricke E."/>
            <person name="Barth S."/>
        </authorList>
    </citation>
    <scope>NUCLEOTIDE SEQUENCE [LARGE SCALE GENOMIC DNA]</scope>
    <source>
        <strain>cv. Cashel</strain>
    </source>
</reference>
<evidence type="ECO:0000255" key="1">
    <source>
        <dbReference type="HAMAP-Rule" id="MF_01323"/>
    </source>
</evidence>
<geneLocation type="chloroplast"/>
<feature type="chain" id="PRO_0000353498" description="DNA-directed RNA polymerase subunit beta'">
    <location>
        <begin position="1"/>
        <end position="676"/>
    </location>
</feature>
<feature type="binding site" evidence="1">
    <location>
        <position position="69"/>
    </location>
    <ligand>
        <name>Zn(2+)</name>
        <dbReference type="ChEBI" id="CHEBI:29105"/>
    </ligand>
</feature>
<feature type="binding site" evidence="1">
    <location>
        <position position="71"/>
    </location>
    <ligand>
        <name>Zn(2+)</name>
        <dbReference type="ChEBI" id="CHEBI:29105"/>
    </ligand>
</feature>
<feature type="binding site" evidence="1">
    <location>
        <position position="87"/>
    </location>
    <ligand>
        <name>Zn(2+)</name>
        <dbReference type="ChEBI" id="CHEBI:29105"/>
    </ligand>
</feature>
<feature type="binding site" evidence="1">
    <location>
        <position position="90"/>
    </location>
    <ligand>
        <name>Zn(2+)</name>
        <dbReference type="ChEBI" id="CHEBI:29105"/>
    </ligand>
</feature>
<feature type="binding site" evidence="1">
    <location>
        <position position="489"/>
    </location>
    <ligand>
        <name>Mg(2+)</name>
        <dbReference type="ChEBI" id="CHEBI:18420"/>
    </ligand>
</feature>
<feature type="binding site" evidence="1">
    <location>
        <position position="491"/>
    </location>
    <ligand>
        <name>Mg(2+)</name>
        <dbReference type="ChEBI" id="CHEBI:18420"/>
    </ligand>
</feature>
<feature type="binding site" evidence="1">
    <location>
        <position position="493"/>
    </location>
    <ligand>
        <name>Mg(2+)</name>
        <dbReference type="ChEBI" id="CHEBI:18420"/>
    </ligand>
</feature>
<keyword id="KW-0150">Chloroplast</keyword>
<keyword id="KW-0240">DNA-directed RNA polymerase</keyword>
<keyword id="KW-0460">Magnesium</keyword>
<keyword id="KW-0479">Metal-binding</keyword>
<keyword id="KW-0548">Nucleotidyltransferase</keyword>
<keyword id="KW-0934">Plastid</keyword>
<keyword id="KW-0804">Transcription</keyword>
<keyword id="KW-0808">Transferase</keyword>
<keyword id="KW-0862">Zinc</keyword>
<name>RPOC1_LOLPR</name>
<comment type="function">
    <text evidence="1">DNA-dependent RNA polymerase catalyzes the transcription of DNA into RNA using the four ribonucleoside triphosphates as substrates.</text>
</comment>
<comment type="catalytic activity">
    <reaction evidence="1">
        <text>RNA(n) + a ribonucleoside 5'-triphosphate = RNA(n+1) + diphosphate</text>
        <dbReference type="Rhea" id="RHEA:21248"/>
        <dbReference type="Rhea" id="RHEA-COMP:14527"/>
        <dbReference type="Rhea" id="RHEA-COMP:17342"/>
        <dbReference type="ChEBI" id="CHEBI:33019"/>
        <dbReference type="ChEBI" id="CHEBI:61557"/>
        <dbReference type="ChEBI" id="CHEBI:140395"/>
        <dbReference type="EC" id="2.7.7.6"/>
    </reaction>
</comment>
<comment type="cofactor">
    <cofactor evidence="1">
        <name>Mg(2+)</name>
        <dbReference type="ChEBI" id="CHEBI:18420"/>
    </cofactor>
    <text evidence="1">Binds 1 Mg(2+) ion per subunit.</text>
</comment>
<comment type="cofactor">
    <cofactor evidence="1">
        <name>Zn(2+)</name>
        <dbReference type="ChEBI" id="CHEBI:29105"/>
    </cofactor>
    <text evidence="1">Binds 1 Zn(2+) ion per subunit.</text>
</comment>
<comment type="subunit">
    <text evidence="1">In plastids the minimal PEP RNA polymerase catalytic core is composed of four subunits: alpha, beta, beta', and beta''. When a (nuclear-encoded) sigma factor is associated with the core the holoenzyme is formed, which can initiate transcription.</text>
</comment>
<comment type="subcellular location">
    <subcellularLocation>
        <location evidence="1">Plastid</location>
        <location evidence="1">Chloroplast</location>
    </subcellularLocation>
</comment>
<comment type="similarity">
    <text evidence="1">Belongs to the RNA polymerase beta' chain family. RpoC1 subfamily.</text>
</comment>
<proteinExistence type="inferred from homology"/>
<accession>A8Y9G1</accession>